<comment type="function">
    <text evidence="1">Promotes the survival of neuronal populations that are all located either in the central nervous system or directly connected to it.</text>
</comment>
<comment type="subcellular location">
    <subcellularLocation>
        <location evidence="1">Secreted</location>
    </subcellularLocation>
</comment>
<comment type="similarity">
    <text evidence="4">Belongs to the NGF-beta family.</text>
</comment>
<name>BDNF_ANISC</name>
<dbReference type="EMBL" id="AY988038">
    <property type="protein sequence ID" value="AAY44245.1"/>
    <property type="molecule type" value="Genomic_DNA"/>
</dbReference>
<dbReference type="GlyCosmos" id="Q1X700">
    <property type="glycosylation" value="1 site, No reported glycans"/>
</dbReference>
<dbReference type="GO" id="GO:0030424">
    <property type="term" value="C:axon"/>
    <property type="evidence" value="ECO:0007669"/>
    <property type="project" value="TreeGrafter"/>
</dbReference>
<dbReference type="GO" id="GO:0030425">
    <property type="term" value="C:dendrite"/>
    <property type="evidence" value="ECO:0007669"/>
    <property type="project" value="TreeGrafter"/>
</dbReference>
<dbReference type="GO" id="GO:0005615">
    <property type="term" value="C:extracellular space"/>
    <property type="evidence" value="ECO:0007669"/>
    <property type="project" value="TreeGrafter"/>
</dbReference>
<dbReference type="GO" id="GO:0008021">
    <property type="term" value="C:synaptic vesicle"/>
    <property type="evidence" value="ECO:0007669"/>
    <property type="project" value="TreeGrafter"/>
</dbReference>
<dbReference type="GO" id="GO:0008083">
    <property type="term" value="F:growth factor activity"/>
    <property type="evidence" value="ECO:0007669"/>
    <property type="project" value="UniProtKB-KW"/>
</dbReference>
<dbReference type="GO" id="GO:0005163">
    <property type="term" value="F:nerve growth factor receptor binding"/>
    <property type="evidence" value="ECO:0007669"/>
    <property type="project" value="TreeGrafter"/>
</dbReference>
<dbReference type="GO" id="GO:0007169">
    <property type="term" value="P:cell surface receptor protein tyrosine kinase signaling pathway"/>
    <property type="evidence" value="ECO:0007669"/>
    <property type="project" value="TreeGrafter"/>
</dbReference>
<dbReference type="GO" id="GO:0050804">
    <property type="term" value="P:modulation of chemical synaptic transmission"/>
    <property type="evidence" value="ECO:0007669"/>
    <property type="project" value="TreeGrafter"/>
</dbReference>
<dbReference type="GO" id="GO:0043524">
    <property type="term" value="P:negative regulation of neuron apoptotic process"/>
    <property type="evidence" value="ECO:0007669"/>
    <property type="project" value="TreeGrafter"/>
</dbReference>
<dbReference type="GO" id="GO:0021675">
    <property type="term" value="P:nerve development"/>
    <property type="evidence" value="ECO:0007669"/>
    <property type="project" value="TreeGrafter"/>
</dbReference>
<dbReference type="GO" id="GO:0038180">
    <property type="term" value="P:nerve growth factor signaling pathway"/>
    <property type="evidence" value="ECO:0007669"/>
    <property type="project" value="TreeGrafter"/>
</dbReference>
<dbReference type="GO" id="GO:0048812">
    <property type="term" value="P:neuron projection morphogenesis"/>
    <property type="evidence" value="ECO:0007669"/>
    <property type="project" value="TreeGrafter"/>
</dbReference>
<dbReference type="Gene3D" id="2.10.90.10">
    <property type="entry name" value="Cystine-knot cytokines"/>
    <property type="match status" value="1"/>
</dbReference>
<dbReference type="InterPro" id="IPR020430">
    <property type="entry name" value="Brain-der_neurotrophic_factor"/>
</dbReference>
<dbReference type="InterPro" id="IPR029034">
    <property type="entry name" value="Cystine-knot_cytokine"/>
</dbReference>
<dbReference type="InterPro" id="IPR020408">
    <property type="entry name" value="Nerve_growth_factor-like"/>
</dbReference>
<dbReference type="InterPro" id="IPR002072">
    <property type="entry name" value="Nerve_growth_factor-rel"/>
</dbReference>
<dbReference type="InterPro" id="IPR019846">
    <property type="entry name" value="Nerve_growth_factor_CS"/>
</dbReference>
<dbReference type="PANTHER" id="PTHR11589:SF3">
    <property type="entry name" value="BRAIN-DERIVED NEUROTROPHIC FACTOR"/>
    <property type="match status" value="1"/>
</dbReference>
<dbReference type="PANTHER" id="PTHR11589">
    <property type="entry name" value="NERVE GROWTH FACTOR NGF -RELATED"/>
    <property type="match status" value="1"/>
</dbReference>
<dbReference type="Pfam" id="PF00243">
    <property type="entry name" value="NGF"/>
    <property type="match status" value="1"/>
</dbReference>
<dbReference type="PIRSF" id="PIRSF001789">
    <property type="entry name" value="NGF"/>
    <property type="match status" value="1"/>
</dbReference>
<dbReference type="PRINTS" id="PR01912">
    <property type="entry name" value="BDNFACTOR"/>
</dbReference>
<dbReference type="PRINTS" id="PR00268">
    <property type="entry name" value="NGF"/>
</dbReference>
<dbReference type="SMART" id="SM00140">
    <property type="entry name" value="NGF"/>
    <property type="match status" value="1"/>
</dbReference>
<dbReference type="SUPFAM" id="SSF57501">
    <property type="entry name" value="Cystine-knot cytokines"/>
    <property type="match status" value="1"/>
</dbReference>
<dbReference type="PROSITE" id="PS00248">
    <property type="entry name" value="NGF_1"/>
    <property type="match status" value="1"/>
</dbReference>
<dbReference type="PROSITE" id="PS50270">
    <property type="entry name" value="NGF_2"/>
    <property type="match status" value="1"/>
</dbReference>
<gene>
    <name type="primary">BDNF</name>
</gene>
<proteinExistence type="inferred from homology"/>
<accession>Q1X700</accession>
<evidence type="ECO:0000250" key="1"/>
<evidence type="ECO:0000255" key="2"/>
<evidence type="ECO:0000256" key="3">
    <source>
        <dbReference type="SAM" id="MobiDB-lite"/>
    </source>
</evidence>
<evidence type="ECO:0000305" key="4"/>
<reference key="1">
    <citation type="journal article" date="2006" name="Mol. Phylogenet. Evol.">
        <title>Dispersal and vicariance: the complex evolutionary history of boid snakes.</title>
        <authorList>
            <person name="Noonan B.P."/>
            <person name="Chippindale P.T."/>
        </authorList>
    </citation>
    <scope>NUCLEOTIDE SEQUENCE [GENOMIC DNA]</scope>
</reference>
<keyword id="KW-0165">Cleavage on pair of basic residues</keyword>
<keyword id="KW-1015">Disulfide bond</keyword>
<keyword id="KW-0325">Glycoprotein</keyword>
<keyword id="KW-0339">Growth factor</keyword>
<keyword id="KW-0964">Secreted</keyword>
<organism>
    <name type="scientific">Anilius scytale</name>
    <name type="common">Coral cylinder snake</name>
    <name type="synonym">Anguis scytale</name>
    <dbReference type="NCBI Taxonomy" id="51844"/>
    <lineage>
        <taxon>Eukaryota</taxon>
        <taxon>Metazoa</taxon>
        <taxon>Chordata</taxon>
        <taxon>Craniata</taxon>
        <taxon>Vertebrata</taxon>
        <taxon>Euteleostomi</taxon>
        <taxon>Lepidosauria</taxon>
        <taxon>Squamata</taxon>
        <taxon>Bifurcata</taxon>
        <taxon>Unidentata</taxon>
        <taxon>Episquamata</taxon>
        <taxon>Toxicofera</taxon>
        <taxon>Serpentes</taxon>
        <taxon>Henophidia</taxon>
        <taxon>Aniliidae</taxon>
        <taxon>Anilius</taxon>
    </lineage>
</organism>
<sequence>GQGSLAYPGLRTQGNLETLGGPNDATRGLTSLADTFEHVIEELLDEQQVIQPSKENKDADLYSSRVMLSSQVPLEPPLLFLLEEYKNYLDAANMSMRVRRHSDPARRGELSVCDSTSEWVTAAEKKTAVDMSGATVTVLEKVPVPKGQLKQXFYETKCSSKGYAKEGCRGIDKRYWNSQCRTTQSYVRALT</sequence>
<feature type="propeptide" id="PRO_0000346656" evidence="1">
    <location>
        <begin position="1" status="less than"/>
        <end position="100"/>
    </location>
</feature>
<feature type="chain" id="PRO_0000346657" description="Neurotrophic factor BDNF">
    <location>
        <begin position="101"/>
        <end position="191" status="greater than"/>
    </location>
</feature>
<feature type="region of interest" description="Disordered" evidence="3">
    <location>
        <begin position="1"/>
        <end position="23"/>
    </location>
</feature>
<feature type="glycosylation site" description="N-linked (GlcNAc...) asparagine" evidence="2">
    <location>
        <position position="93"/>
    </location>
</feature>
<feature type="disulfide bond" evidence="1">
    <location>
        <begin position="113"/>
        <end position="180"/>
    </location>
</feature>
<feature type="non-terminal residue">
    <location>
        <position position="1"/>
    </location>
</feature>
<feature type="non-terminal residue">
    <location>
        <position position="191"/>
    </location>
</feature>
<protein>
    <recommendedName>
        <fullName evidence="4">Neurotrophic factor BDNF precursor form</fullName>
        <shortName>proBDNF</shortName>
    </recommendedName>
    <alternativeName>
        <fullName>Brain-derived neurotrophic factor</fullName>
    </alternativeName>
    <component>
        <recommendedName>
            <fullName>Neurotrophic factor BDNF</fullName>
        </recommendedName>
    </component>
</protein>